<accession>P66075</accession>
<accession>Q8XFN6</accession>
<name>RL15_SHIFL</name>
<reference key="1">
    <citation type="journal article" date="2002" name="Nucleic Acids Res.">
        <title>Genome sequence of Shigella flexneri 2a: insights into pathogenicity through comparison with genomes of Escherichia coli K12 and O157.</title>
        <authorList>
            <person name="Jin Q."/>
            <person name="Yuan Z."/>
            <person name="Xu J."/>
            <person name="Wang Y."/>
            <person name="Shen Y."/>
            <person name="Lu W."/>
            <person name="Wang J."/>
            <person name="Liu H."/>
            <person name="Yang J."/>
            <person name="Yang F."/>
            <person name="Zhang X."/>
            <person name="Zhang J."/>
            <person name="Yang G."/>
            <person name="Wu H."/>
            <person name="Qu D."/>
            <person name="Dong J."/>
            <person name="Sun L."/>
            <person name="Xue Y."/>
            <person name="Zhao A."/>
            <person name="Gao Y."/>
            <person name="Zhu J."/>
            <person name="Kan B."/>
            <person name="Ding K."/>
            <person name="Chen S."/>
            <person name="Cheng H."/>
            <person name="Yao Z."/>
            <person name="He B."/>
            <person name="Chen R."/>
            <person name="Ma D."/>
            <person name="Qiang B."/>
            <person name="Wen Y."/>
            <person name="Hou Y."/>
            <person name="Yu J."/>
        </authorList>
    </citation>
    <scope>NUCLEOTIDE SEQUENCE [LARGE SCALE GENOMIC DNA]</scope>
    <source>
        <strain>301 / Serotype 2a</strain>
    </source>
</reference>
<reference key="2">
    <citation type="journal article" date="2003" name="Infect. Immun.">
        <title>Complete genome sequence and comparative genomics of Shigella flexneri serotype 2a strain 2457T.</title>
        <authorList>
            <person name="Wei J."/>
            <person name="Goldberg M.B."/>
            <person name="Burland V."/>
            <person name="Venkatesan M.M."/>
            <person name="Deng W."/>
            <person name="Fournier G."/>
            <person name="Mayhew G.F."/>
            <person name="Plunkett G. III"/>
            <person name="Rose D.J."/>
            <person name="Darling A."/>
            <person name="Mau B."/>
            <person name="Perna N.T."/>
            <person name="Payne S.M."/>
            <person name="Runyen-Janecky L.J."/>
            <person name="Zhou S."/>
            <person name="Schwartz D.C."/>
            <person name="Blattner F.R."/>
        </authorList>
    </citation>
    <scope>NUCLEOTIDE SEQUENCE [LARGE SCALE GENOMIC DNA]</scope>
    <source>
        <strain>ATCC 700930 / 2457T / Serotype 2a</strain>
    </source>
</reference>
<organism>
    <name type="scientific">Shigella flexneri</name>
    <dbReference type="NCBI Taxonomy" id="623"/>
    <lineage>
        <taxon>Bacteria</taxon>
        <taxon>Pseudomonadati</taxon>
        <taxon>Pseudomonadota</taxon>
        <taxon>Gammaproteobacteria</taxon>
        <taxon>Enterobacterales</taxon>
        <taxon>Enterobacteriaceae</taxon>
        <taxon>Shigella</taxon>
    </lineage>
</organism>
<dbReference type="EMBL" id="AE005674">
    <property type="protein sequence ID" value="AAN44796.1"/>
    <property type="molecule type" value="Genomic_DNA"/>
</dbReference>
<dbReference type="EMBL" id="AE014073">
    <property type="protein sequence ID" value="AAP19380.1"/>
    <property type="molecule type" value="Genomic_DNA"/>
</dbReference>
<dbReference type="RefSeq" id="NP_709089.1">
    <property type="nucleotide sequence ID" value="NC_004337.2"/>
</dbReference>
<dbReference type="RefSeq" id="WP_001238917.1">
    <property type="nucleotide sequence ID" value="NZ_WPGW01000088.1"/>
</dbReference>
<dbReference type="SMR" id="P66075"/>
<dbReference type="STRING" id="198214.SF3333"/>
<dbReference type="PaxDb" id="198214-SF3333"/>
<dbReference type="GeneID" id="1027045"/>
<dbReference type="GeneID" id="93778686"/>
<dbReference type="KEGG" id="sfl:SF3333"/>
<dbReference type="KEGG" id="sfx:S4429"/>
<dbReference type="PATRIC" id="fig|198214.7.peg.3942"/>
<dbReference type="HOGENOM" id="CLU_055188_4_2_6"/>
<dbReference type="Proteomes" id="UP000001006">
    <property type="component" value="Chromosome"/>
</dbReference>
<dbReference type="Proteomes" id="UP000002673">
    <property type="component" value="Chromosome"/>
</dbReference>
<dbReference type="GO" id="GO:0022625">
    <property type="term" value="C:cytosolic large ribosomal subunit"/>
    <property type="evidence" value="ECO:0007669"/>
    <property type="project" value="TreeGrafter"/>
</dbReference>
<dbReference type="GO" id="GO:0019843">
    <property type="term" value="F:rRNA binding"/>
    <property type="evidence" value="ECO:0007669"/>
    <property type="project" value="UniProtKB-UniRule"/>
</dbReference>
<dbReference type="GO" id="GO:0003735">
    <property type="term" value="F:structural constituent of ribosome"/>
    <property type="evidence" value="ECO:0007669"/>
    <property type="project" value="InterPro"/>
</dbReference>
<dbReference type="GO" id="GO:0006412">
    <property type="term" value="P:translation"/>
    <property type="evidence" value="ECO:0007669"/>
    <property type="project" value="UniProtKB-UniRule"/>
</dbReference>
<dbReference type="FunFam" id="3.100.10.10:FF:000003">
    <property type="entry name" value="50S ribosomal protein L15"/>
    <property type="match status" value="1"/>
</dbReference>
<dbReference type="Gene3D" id="3.100.10.10">
    <property type="match status" value="1"/>
</dbReference>
<dbReference type="HAMAP" id="MF_01341">
    <property type="entry name" value="Ribosomal_uL15"/>
    <property type="match status" value="1"/>
</dbReference>
<dbReference type="InterPro" id="IPR030878">
    <property type="entry name" value="Ribosomal_uL15"/>
</dbReference>
<dbReference type="InterPro" id="IPR021131">
    <property type="entry name" value="Ribosomal_uL15/eL18"/>
</dbReference>
<dbReference type="InterPro" id="IPR036227">
    <property type="entry name" value="Ribosomal_uL15/eL18_sf"/>
</dbReference>
<dbReference type="InterPro" id="IPR005749">
    <property type="entry name" value="Ribosomal_uL15_bac-type"/>
</dbReference>
<dbReference type="InterPro" id="IPR001196">
    <property type="entry name" value="Ribosomal_uL15_CS"/>
</dbReference>
<dbReference type="NCBIfam" id="TIGR01071">
    <property type="entry name" value="rplO_bact"/>
    <property type="match status" value="1"/>
</dbReference>
<dbReference type="PANTHER" id="PTHR12934">
    <property type="entry name" value="50S RIBOSOMAL PROTEIN L15"/>
    <property type="match status" value="1"/>
</dbReference>
<dbReference type="PANTHER" id="PTHR12934:SF11">
    <property type="entry name" value="LARGE RIBOSOMAL SUBUNIT PROTEIN UL15M"/>
    <property type="match status" value="1"/>
</dbReference>
<dbReference type="Pfam" id="PF00828">
    <property type="entry name" value="Ribosomal_L27A"/>
    <property type="match status" value="1"/>
</dbReference>
<dbReference type="SUPFAM" id="SSF52080">
    <property type="entry name" value="Ribosomal proteins L15p and L18e"/>
    <property type="match status" value="1"/>
</dbReference>
<dbReference type="PROSITE" id="PS00475">
    <property type="entry name" value="RIBOSOMAL_L15"/>
    <property type="match status" value="1"/>
</dbReference>
<feature type="chain" id="PRO_0000104804" description="Large ribosomal subunit protein uL15">
    <location>
        <begin position="1"/>
        <end position="144"/>
    </location>
</feature>
<feature type="region of interest" description="Disordered" evidence="2">
    <location>
        <begin position="1"/>
        <end position="54"/>
    </location>
</feature>
<feature type="compositionally biased region" description="Gly residues" evidence="2">
    <location>
        <begin position="21"/>
        <end position="31"/>
    </location>
</feature>
<comment type="function">
    <text evidence="1">Binds to the 23S rRNA.</text>
</comment>
<comment type="subunit">
    <text evidence="1">Part of the 50S ribosomal subunit.</text>
</comment>
<comment type="similarity">
    <text evidence="1">Belongs to the universal ribosomal protein uL15 family.</text>
</comment>
<keyword id="KW-1185">Reference proteome</keyword>
<keyword id="KW-0687">Ribonucleoprotein</keyword>
<keyword id="KW-0689">Ribosomal protein</keyword>
<keyword id="KW-0694">RNA-binding</keyword>
<keyword id="KW-0699">rRNA-binding</keyword>
<proteinExistence type="inferred from homology"/>
<gene>
    <name evidence="1" type="primary">rplO</name>
    <name type="ordered locus">SF3333</name>
    <name type="ordered locus">S4429</name>
</gene>
<evidence type="ECO:0000255" key="1">
    <source>
        <dbReference type="HAMAP-Rule" id="MF_01341"/>
    </source>
</evidence>
<evidence type="ECO:0000256" key="2">
    <source>
        <dbReference type="SAM" id="MobiDB-lite"/>
    </source>
</evidence>
<evidence type="ECO:0000305" key="3"/>
<protein>
    <recommendedName>
        <fullName evidence="1">Large ribosomal subunit protein uL15</fullName>
    </recommendedName>
    <alternativeName>
        <fullName evidence="3">50S ribosomal protein L15</fullName>
    </alternativeName>
</protein>
<sequence>MRLNTLSPAEGSKKAGKRLGRGIGSGLGKTGGRGHKGQKSRSGGGVRRGFEGGQMPLYRRLPKFGFTSRKAAITAEVRLSDLAKVEGGVVDLNTLKAANIIGIQIEFAKVILAGEVTTPVTVRGLRVTKGARAAIEAAGGKIEE</sequence>